<gene>
    <name evidence="1" type="primary">tal</name>
    <name type="ordered locus">Cphamn1_2476</name>
</gene>
<name>TAL_CHLPB</name>
<feature type="chain" id="PRO_1000126289" description="Probable transaldolase">
    <location>
        <begin position="1"/>
        <end position="223"/>
    </location>
</feature>
<feature type="active site" description="Schiff-base intermediate with substrate" evidence="1">
    <location>
        <position position="91"/>
    </location>
</feature>
<accession>B3EQ72</accession>
<evidence type="ECO:0000255" key="1">
    <source>
        <dbReference type="HAMAP-Rule" id="MF_00494"/>
    </source>
</evidence>
<protein>
    <recommendedName>
        <fullName evidence="1">Probable transaldolase</fullName>
        <ecNumber evidence="1">2.2.1.2</ecNumber>
    </recommendedName>
</protein>
<organism>
    <name type="scientific">Chlorobium phaeobacteroides (strain BS1)</name>
    <dbReference type="NCBI Taxonomy" id="331678"/>
    <lineage>
        <taxon>Bacteria</taxon>
        <taxon>Pseudomonadati</taxon>
        <taxon>Chlorobiota</taxon>
        <taxon>Chlorobiia</taxon>
        <taxon>Chlorobiales</taxon>
        <taxon>Chlorobiaceae</taxon>
        <taxon>Chlorobium/Pelodictyon group</taxon>
        <taxon>Chlorobium</taxon>
    </lineage>
</organism>
<proteinExistence type="inferred from homology"/>
<keyword id="KW-0963">Cytoplasm</keyword>
<keyword id="KW-0570">Pentose shunt</keyword>
<keyword id="KW-0704">Schiff base</keyword>
<keyword id="KW-0808">Transferase</keyword>
<reference key="1">
    <citation type="submission" date="2008-06" db="EMBL/GenBank/DDBJ databases">
        <title>Complete sequence of Chlorobium phaeobacteroides BS1.</title>
        <authorList>
            <consortium name="US DOE Joint Genome Institute"/>
            <person name="Lucas S."/>
            <person name="Copeland A."/>
            <person name="Lapidus A."/>
            <person name="Glavina del Rio T."/>
            <person name="Dalin E."/>
            <person name="Tice H."/>
            <person name="Bruce D."/>
            <person name="Goodwin L."/>
            <person name="Pitluck S."/>
            <person name="Schmutz J."/>
            <person name="Larimer F."/>
            <person name="Land M."/>
            <person name="Hauser L."/>
            <person name="Kyrpides N."/>
            <person name="Ovchinnikova G."/>
            <person name="Li T."/>
            <person name="Liu Z."/>
            <person name="Zhao F."/>
            <person name="Overmann J."/>
            <person name="Bryant D.A."/>
            <person name="Richardson P."/>
        </authorList>
    </citation>
    <scope>NUCLEOTIDE SEQUENCE [LARGE SCALE GENOMIC DNA]</scope>
    <source>
        <strain>BS1</strain>
    </source>
</reference>
<dbReference type="EC" id="2.2.1.2" evidence="1"/>
<dbReference type="EMBL" id="CP001101">
    <property type="protein sequence ID" value="ACE05370.1"/>
    <property type="molecule type" value="Genomic_DNA"/>
</dbReference>
<dbReference type="SMR" id="B3EQ72"/>
<dbReference type="STRING" id="331678.Cphamn1_2476"/>
<dbReference type="KEGG" id="cpb:Cphamn1_2476"/>
<dbReference type="eggNOG" id="COG0176">
    <property type="taxonomic scope" value="Bacteria"/>
</dbReference>
<dbReference type="HOGENOM" id="CLU_079764_0_0_10"/>
<dbReference type="OrthoDB" id="9807051at2"/>
<dbReference type="UniPathway" id="UPA00115">
    <property type="reaction ID" value="UER00414"/>
</dbReference>
<dbReference type="GO" id="GO:0005737">
    <property type="term" value="C:cytoplasm"/>
    <property type="evidence" value="ECO:0007669"/>
    <property type="project" value="UniProtKB-SubCell"/>
</dbReference>
<dbReference type="GO" id="GO:0016832">
    <property type="term" value="F:aldehyde-lyase activity"/>
    <property type="evidence" value="ECO:0007669"/>
    <property type="project" value="InterPro"/>
</dbReference>
<dbReference type="GO" id="GO:0004801">
    <property type="term" value="F:transaldolase activity"/>
    <property type="evidence" value="ECO:0007669"/>
    <property type="project" value="UniProtKB-UniRule"/>
</dbReference>
<dbReference type="GO" id="GO:0005975">
    <property type="term" value="P:carbohydrate metabolic process"/>
    <property type="evidence" value="ECO:0007669"/>
    <property type="project" value="InterPro"/>
</dbReference>
<dbReference type="GO" id="GO:0006098">
    <property type="term" value="P:pentose-phosphate shunt"/>
    <property type="evidence" value="ECO:0007669"/>
    <property type="project" value="UniProtKB-UniRule"/>
</dbReference>
<dbReference type="CDD" id="cd00956">
    <property type="entry name" value="Transaldolase_FSA"/>
    <property type="match status" value="1"/>
</dbReference>
<dbReference type="FunFam" id="3.20.20.70:FF:000018">
    <property type="entry name" value="Probable transaldolase"/>
    <property type="match status" value="1"/>
</dbReference>
<dbReference type="Gene3D" id="3.20.20.70">
    <property type="entry name" value="Aldolase class I"/>
    <property type="match status" value="1"/>
</dbReference>
<dbReference type="HAMAP" id="MF_00494">
    <property type="entry name" value="Transaldolase_3b"/>
    <property type="match status" value="1"/>
</dbReference>
<dbReference type="InterPro" id="IPR013785">
    <property type="entry name" value="Aldolase_TIM"/>
</dbReference>
<dbReference type="InterPro" id="IPR001585">
    <property type="entry name" value="TAL/FSA"/>
</dbReference>
<dbReference type="InterPro" id="IPR022999">
    <property type="entry name" value="Transaldolase_3B"/>
</dbReference>
<dbReference type="InterPro" id="IPR004731">
    <property type="entry name" value="Transaldolase_3B/F6P_aldolase"/>
</dbReference>
<dbReference type="InterPro" id="IPR018225">
    <property type="entry name" value="Transaldolase_AS"/>
</dbReference>
<dbReference type="InterPro" id="IPR033919">
    <property type="entry name" value="TSA/FSA_arc/bac"/>
</dbReference>
<dbReference type="NCBIfam" id="TIGR00875">
    <property type="entry name" value="fsa_talC_mipB"/>
    <property type="match status" value="1"/>
</dbReference>
<dbReference type="PANTHER" id="PTHR10683:SF40">
    <property type="entry name" value="FRUCTOSE-6-PHOSPHATE ALDOLASE 1-RELATED"/>
    <property type="match status" value="1"/>
</dbReference>
<dbReference type="PANTHER" id="PTHR10683">
    <property type="entry name" value="TRANSALDOLASE"/>
    <property type="match status" value="1"/>
</dbReference>
<dbReference type="Pfam" id="PF00923">
    <property type="entry name" value="TAL_FSA"/>
    <property type="match status" value="1"/>
</dbReference>
<dbReference type="SUPFAM" id="SSF51569">
    <property type="entry name" value="Aldolase"/>
    <property type="match status" value="1"/>
</dbReference>
<dbReference type="PROSITE" id="PS01054">
    <property type="entry name" value="TRANSALDOLASE_1"/>
    <property type="match status" value="1"/>
</dbReference>
<comment type="function">
    <text evidence="1">Transaldolase is important for the balance of metabolites in the pentose-phosphate pathway.</text>
</comment>
<comment type="catalytic activity">
    <reaction evidence="1">
        <text>D-sedoheptulose 7-phosphate + D-glyceraldehyde 3-phosphate = D-erythrose 4-phosphate + beta-D-fructose 6-phosphate</text>
        <dbReference type="Rhea" id="RHEA:17053"/>
        <dbReference type="ChEBI" id="CHEBI:16897"/>
        <dbReference type="ChEBI" id="CHEBI:57483"/>
        <dbReference type="ChEBI" id="CHEBI:57634"/>
        <dbReference type="ChEBI" id="CHEBI:59776"/>
        <dbReference type="EC" id="2.2.1.2"/>
    </reaction>
</comment>
<comment type="pathway">
    <text evidence="1">Carbohydrate degradation; pentose phosphate pathway; D-glyceraldehyde 3-phosphate and beta-D-fructose 6-phosphate from D-ribose 5-phosphate and D-xylulose 5-phosphate (non-oxidative stage): step 2/3.</text>
</comment>
<comment type="subcellular location">
    <subcellularLocation>
        <location evidence="1">Cytoplasm</location>
    </subcellularLocation>
</comment>
<comment type="similarity">
    <text evidence="1">Belongs to the transaldolase family. Type 3B subfamily.</text>
</comment>
<sequence>MKFFIDTADLEEISAANDLGVLDGVTTNPSLVAKIVSDPEKFTYQDFKDHIAKVCEIVDGPVSAEVTTLSPEEMISQGEELAAIHDNVVVKCPLTRDGLKAMRHLSGNGIRINATLVFSPSQAILAAKAGASYVSPFVGRLDDISTEGMALVDQIVRIYDNYRFPTEVLVASIRHPQHVVEAALMGADIATIPFDVIGQLLKHPLTDSGLKRFMDDASVIQQG</sequence>